<sequence>MKADLHIHTKYSGIGKFWKLKFPDSVEEPRNILKVAKKKGIEVVAITDHNTIRGGVETKKLEKEFGVEVVIGSEIMTTEGEIIGLFLNEDIPKGLSPEETIEKIKEQGGLAIAPHPYSPICKALGDRIFDLDLDGVEVFNAYHRDGIVNNIALNKVIKELPQKAFCIYWRE</sequence>
<accession>Q58982</accession>
<dbReference type="EMBL" id="L77117">
    <property type="protein sequence ID" value="AAB99616.1"/>
    <property type="molecule type" value="Genomic_DNA"/>
</dbReference>
<dbReference type="PIR" id="B64498">
    <property type="entry name" value="B64498"/>
</dbReference>
<dbReference type="SMR" id="Q58982"/>
<dbReference type="STRING" id="243232.MJ_1587"/>
<dbReference type="PaxDb" id="243232-MJ_1587"/>
<dbReference type="EnsemblBacteria" id="AAB99616">
    <property type="protein sequence ID" value="AAB99616"/>
    <property type="gene ID" value="MJ_1587"/>
</dbReference>
<dbReference type="KEGG" id="mja:MJ_1587"/>
<dbReference type="eggNOG" id="arCOG00306">
    <property type="taxonomic scope" value="Archaea"/>
</dbReference>
<dbReference type="HOGENOM" id="CLU_072983_0_0_2"/>
<dbReference type="InParanoid" id="Q58982"/>
<dbReference type="PhylomeDB" id="Q58982"/>
<dbReference type="Proteomes" id="UP000000805">
    <property type="component" value="Chromosome"/>
</dbReference>
<dbReference type="GO" id="GO:0035312">
    <property type="term" value="F:5'-3' DNA exonuclease activity"/>
    <property type="evidence" value="ECO:0000318"/>
    <property type="project" value="GO_Central"/>
</dbReference>
<dbReference type="GO" id="GO:0004534">
    <property type="term" value="F:5'-3' RNA exonuclease activity"/>
    <property type="evidence" value="ECO:0000318"/>
    <property type="project" value="GO_Central"/>
</dbReference>
<dbReference type="CDD" id="cd07432">
    <property type="entry name" value="PHP_HisPPase"/>
    <property type="match status" value="1"/>
</dbReference>
<dbReference type="Gene3D" id="3.20.20.140">
    <property type="entry name" value="Metal-dependent hydrolases"/>
    <property type="match status" value="1"/>
</dbReference>
<dbReference type="InterPro" id="IPR004013">
    <property type="entry name" value="PHP_dom"/>
</dbReference>
<dbReference type="InterPro" id="IPR052018">
    <property type="entry name" value="PHP_domain"/>
</dbReference>
<dbReference type="InterPro" id="IPR003141">
    <property type="entry name" value="Pol/His_phosphatase_N"/>
</dbReference>
<dbReference type="InterPro" id="IPR016195">
    <property type="entry name" value="Pol/histidinol_Pase-like"/>
</dbReference>
<dbReference type="PANTHER" id="PTHR42924">
    <property type="entry name" value="EXONUCLEASE"/>
    <property type="match status" value="1"/>
</dbReference>
<dbReference type="PANTHER" id="PTHR42924:SF3">
    <property type="entry name" value="POLYMERASE_HISTIDINOL PHOSPHATASE N-TERMINAL DOMAIN-CONTAINING PROTEIN"/>
    <property type="match status" value="1"/>
</dbReference>
<dbReference type="Pfam" id="PF02811">
    <property type="entry name" value="PHP"/>
    <property type="match status" value="1"/>
</dbReference>
<dbReference type="SMART" id="SM00481">
    <property type="entry name" value="POLIIIAc"/>
    <property type="match status" value="1"/>
</dbReference>
<dbReference type="SUPFAM" id="SSF89550">
    <property type="entry name" value="PHP domain-like"/>
    <property type="match status" value="1"/>
</dbReference>
<reference key="1">
    <citation type="journal article" date="1996" name="Science">
        <title>Complete genome sequence of the methanogenic archaeon, Methanococcus jannaschii.</title>
        <authorList>
            <person name="Bult C.J."/>
            <person name="White O."/>
            <person name="Olsen G.J."/>
            <person name="Zhou L."/>
            <person name="Fleischmann R.D."/>
            <person name="Sutton G.G."/>
            <person name="Blake J.A."/>
            <person name="FitzGerald L.M."/>
            <person name="Clayton R.A."/>
            <person name="Gocayne J.D."/>
            <person name="Kerlavage A.R."/>
            <person name="Dougherty B.A."/>
            <person name="Tomb J.-F."/>
            <person name="Adams M.D."/>
            <person name="Reich C.I."/>
            <person name="Overbeek R."/>
            <person name="Kirkness E.F."/>
            <person name="Weinstock K.G."/>
            <person name="Merrick J.M."/>
            <person name="Glodek A."/>
            <person name="Scott J.L."/>
            <person name="Geoghagen N.S.M."/>
            <person name="Weidman J.F."/>
            <person name="Fuhrmann J.L."/>
            <person name="Nguyen D."/>
            <person name="Utterback T.R."/>
            <person name="Kelley J.M."/>
            <person name="Peterson J.D."/>
            <person name="Sadow P.W."/>
            <person name="Hanna M.C."/>
            <person name="Cotton M.D."/>
            <person name="Roberts K.M."/>
            <person name="Hurst M.A."/>
            <person name="Kaine B.P."/>
            <person name="Borodovsky M."/>
            <person name="Klenk H.-P."/>
            <person name="Fraser C.M."/>
            <person name="Smith H.O."/>
            <person name="Woese C.R."/>
            <person name="Venter J.C."/>
        </authorList>
    </citation>
    <scope>NUCLEOTIDE SEQUENCE [LARGE SCALE GENOMIC DNA]</scope>
    <source>
        <strain>ATCC 43067 / DSM 2661 / JAL-1 / JCM 10045 / NBRC 100440</strain>
    </source>
</reference>
<organism>
    <name type="scientific">Methanocaldococcus jannaschii (strain ATCC 43067 / DSM 2661 / JAL-1 / JCM 10045 / NBRC 100440)</name>
    <name type="common">Methanococcus jannaschii</name>
    <dbReference type="NCBI Taxonomy" id="243232"/>
    <lineage>
        <taxon>Archaea</taxon>
        <taxon>Methanobacteriati</taxon>
        <taxon>Methanobacteriota</taxon>
        <taxon>Methanomada group</taxon>
        <taxon>Methanococci</taxon>
        <taxon>Methanococcales</taxon>
        <taxon>Methanocaldococcaceae</taxon>
        <taxon>Methanocaldococcus</taxon>
    </lineage>
</organism>
<name>Y1587_METJA</name>
<feature type="chain" id="PRO_0000107428" description="Uncharacterized protein MJ1587">
    <location>
        <begin position="1"/>
        <end position="171"/>
    </location>
</feature>
<gene>
    <name type="ordered locus">MJ1587</name>
</gene>
<proteinExistence type="predicted"/>
<comment type="similarity">
    <text evidence="1">To M.jannaschii MJ0417.</text>
</comment>
<evidence type="ECO:0000305" key="1"/>
<protein>
    <recommendedName>
        <fullName>Uncharacterized protein MJ1587</fullName>
    </recommendedName>
</protein>
<keyword id="KW-1185">Reference proteome</keyword>